<evidence type="ECO:0000250" key="1"/>
<evidence type="ECO:0000255" key="2"/>
<evidence type="ECO:0000256" key="3">
    <source>
        <dbReference type="SAM" id="MobiDB-lite"/>
    </source>
</evidence>
<evidence type="ECO:0000305" key="4"/>
<comment type="function">
    <text evidence="1">Arabinosyl transferase responsible for the polymerization of arabinose into the arabinan of arabinogalactan.</text>
</comment>
<comment type="subcellular location">
    <subcellularLocation>
        <location evidence="4">Cell membrane</location>
        <topology evidence="4">Multi-pass membrane protein</topology>
    </subcellularLocation>
</comment>
<comment type="similarity">
    <text evidence="4">Belongs to the emb family.</text>
</comment>
<keyword id="KW-1003">Cell membrane</keyword>
<keyword id="KW-0961">Cell wall biogenesis/degradation</keyword>
<keyword id="KW-0328">Glycosyltransferase</keyword>
<keyword id="KW-0472">Membrane</keyword>
<keyword id="KW-1185">Reference proteome</keyword>
<keyword id="KW-0808">Transferase</keyword>
<keyword id="KW-0812">Transmembrane</keyword>
<keyword id="KW-1133">Transmembrane helix</keyword>
<dbReference type="EC" id="2.4.2.-"/>
<dbReference type="EMBL" id="AL583917">
    <property type="protein sequence ID" value="CAC29613.1"/>
    <property type="molecule type" value="Genomic_DNA"/>
</dbReference>
<dbReference type="PIR" id="A86922">
    <property type="entry name" value="A86922"/>
</dbReference>
<dbReference type="RefSeq" id="NP_301202.1">
    <property type="nucleotide sequence ID" value="NC_002677.1"/>
</dbReference>
<dbReference type="RefSeq" id="WP_010907527.1">
    <property type="nucleotide sequence ID" value="NC_002677.1"/>
</dbReference>
<dbReference type="SMR" id="Q9CDA8"/>
<dbReference type="STRING" id="272631.gene:17573917"/>
<dbReference type="CAZy" id="GT53">
    <property type="family name" value="Glycosyltransferase Family 53"/>
</dbReference>
<dbReference type="KEGG" id="mle:ML0105"/>
<dbReference type="PATRIC" id="fig|272631.5.peg.166"/>
<dbReference type="Leproma" id="ML0105"/>
<dbReference type="eggNOG" id="COG1807">
    <property type="taxonomic scope" value="Bacteria"/>
</dbReference>
<dbReference type="HOGENOM" id="CLU_010182_0_0_11"/>
<dbReference type="OrthoDB" id="3584570at2"/>
<dbReference type="Proteomes" id="UP000000806">
    <property type="component" value="Chromosome"/>
</dbReference>
<dbReference type="GO" id="GO:0005886">
    <property type="term" value="C:plasma membrane"/>
    <property type="evidence" value="ECO:0007669"/>
    <property type="project" value="UniProtKB-SubCell"/>
</dbReference>
<dbReference type="GO" id="GO:0052636">
    <property type="term" value="F:arabinosyltransferase activity"/>
    <property type="evidence" value="ECO:0007669"/>
    <property type="project" value="InterPro"/>
</dbReference>
<dbReference type="GO" id="GO:0071766">
    <property type="term" value="P:Actinobacterium-type cell wall biogenesis"/>
    <property type="evidence" value="ECO:0007669"/>
    <property type="project" value="InterPro"/>
</dbReference>
<dbReference type="GO" id="GO:0071555">
    <property type="term" value="P:cell wall organization"/>
    <property type="evidence" value="ECO:0007669"/>
    <property type="project" value="UniProtKB-KW"/>
</dbReference>
<dbReference type="FunFam" id="2.60.120.940:FF:000001">
    <property type="entry name" value="Membrane indolylacetylinositol arabinosyltransferase embC"/>
    <property type="match status" value="1"/>
</dbReference>
<dbReference type="Gene3D" id="2.60.120.610">
    <property type="entry name" value="arabinofuranosyltransferase like domain"/>
    <property type="match status" value="1"/>
</dbReference>
<dbReference type="Gene3D" id="2.60.120.940">
    <property type="entry name" value="EmbC, C-terminal domain, subdomain 2"/>
    <property type="match status" value="1"/>
</dbReference>
<dbReference type="InterPro" id="IPR032731">
    <property type="entry name" value="Arabino_trans_C"/>
</dbReference>
<dbReference type="InterPro" id="IPR042486">
    <property type="entry name" value="Arabino_trans_C_2"/>
</dbReference>
<dbReference type="InterPro" id="IPR007680">
    <property type="entry name" value="Arabino_trans_central"/>
</dbReference>
<dbReference type="InterPro" id="IPR040920">
    <property type="entry name" value="Arabino_trans_N"/>
</dbReference>
<dbReference type="InterPro" id="IPR027451">
    <property type="entry name" value="EmbABC_dom1"/>
</dbReference>
<dbReference type="Pfam" id="PF14896">
    <property type="entry name" value="Arabino_trans_C"/>
    <property type="match status" value="1"/>
</dbReference>
<dbReference type="Pfam" id="PF17689">
    <property type="entry name" value="Arabino_trans_N"/>
    <property type="match status" value="1"/>
</dbReference>
<dbReference type="Pfam" id="PF04602">
    <property type="entry name" value="Arabinose_trans"/>
    <property type="match status" value="1"/>
</dbReference>
<name>EMBA_MYCLE</name>
<sequence>MPHDGHEPPQRIIRLIAVGAGITGLLLCAVVPLLPVKQTTATIRWPQSATRDGWVTQITAPLVSGTPRALDISIPCSAMATLPDSVGLVVSTLPSGGVDTGKSGLFVRANKNAVVVAFRDSVAAVAPRPAVAAGNCSVLHIWANTRGAGANFVGIPGAAGILTAEKKPQVGGIFTDLKVPVQPGLSAHIDIDTRFITAPTAIKKIAVGVGAAAVLIAILALSALDRRNRNGHRLINWRVSMAWLAQWRVILATPPRAGGASRIADGGVLATLLLWHIIGATSSDDGYNLTVARVSSEAGYLANYYRYFGATEAPFDWYFTVLAKLASVSTAGVWMRIPATLAGIACWLIINHWVLRRLGPGTGGLSTNRVAVLTAGAMFLAAWLPFNNGLRPEPLIALGVLFTWVLVERAIALRRLASAATAAVVAILTATLAPQGLIAIAALLTGARAITQTIRRRRTTDGLLAPLLVLAASLSLITLVVFHSQTLATVGESARIKYKVGPTIACYQDFLRYYFLTVESNADGSMTRRFPVLVLLLCMFGVLVVLLRRSRVPGLASGPTWRLIGTTATSLLLLTFTPTKWAIQFGALAGLTGTFGAIAAFAFARISLHTRRNLTVYITALLFVLAWATAGINGWFGVSNYGVPWFDIQPVIAGHPVTSIFLTLSILTGLLAGGQHFRLDYAKHTEVKDTRRNRFLATTPLVVVATTMVLCEVGSLAKGAVARYPLYTTAKANLAALRSGLAPSVCAMADDVLTEPDPNAGMLQPVPGQIFGPTGPLGGMNPIGFKPEGVNDDLKSDPVVSKPGLVNSDASPNKPNVTFSDSAGTAGGKGPVGVNGSHVALPFGLDPDRTPVMGSYGENTLAASATSAWYQLPLHWKESIADRPLVVVSAAGAIWSYKEDGNFIYGQSLKLQWGVTRPDGIIQPLAQVMPIDIGPQPAWRNLRFPLTWAPPEANVARVVAYDPNLSPDQWLAFTPPRVPVLQTLQQLLGSQTPVLMDIATAANFPCQRPFSEHLGIAELPQYRILPDHKQTAASSNLWQSSEAGGPFLFLQALLRTSTISTYLRDDWYRDWGSVEQYYRLVPADQAPEAVVKQGMITVPGWIRRGPIRALP</sequence>
<accession>Q9CDA8</accession>
<feature type="chain" id="PRO_0000220562" description="Probable arabinosyltransferase A">
    <location>
        <begin position="1"/>
        <end position="1111"/>
    </location>
</feature>
<feature type="transmembrane region" description="Helical" evidence="2">
    <location>
        <begin position="12"/>
        <end position="34"/>
    </location>
</feature>
<feature type="transmembrane region" description="Helical" evidence="2">
    <location>
        <begin position="205"/>
        <end position="224"/>
    </location>
</feature>
<feature type="transmembrane region" description="Helical" evidence="2">
    <location>
        <begin position="333"/>
        <end position="355"/>
    </location>
</feature>
<feature type="transmembrane region" description="Helical" evidence="2">
    <location>
        <begin position="370"/>
        <end position="387"/>
    </location>
</feature>
<feature type="transmembrane region" description="Helical" evidence="2">
    <location>
        <begin position="394"/>
        <end position="413"/>
    </location>
</feature>
<feature type="transmembrane region" description="Helical" evidence="2">
    <location>
        <begin position="423"/>
        <end position="445"/>
    </location>
</feature>
<feature type="transmembrane region" description="Helical" evidence="2">
    <location>
        <begin position="462"/>
        <end position="484"/>
    </location>
</feature>
<feature type="transmembrane region" description="Helical" evidence="2">
    <location>
        <begin position="530"/>
        <end position="547"/>
    </location>
</feature>
<feature type="transmembrane region" description="Helical" evidence="2">
    <location>
        <begin position="554"/>
        <end position="576"/>
    </location>
</feature>
<feature type="transmembrane region" description="Helical" evidence="2">
    <location>
        <begin position="581"/>
        <end position="603"/>
    </location>
</feature>
<feature type="transmembrane region" description="Helical" evidence="2">
    <location>
        <begin position="615"/>
        <end position="637"/>
    </location>
</feature>
<feature type="transmembrane region" description="Helical" evidence="2">
    <location>
        <begin position="652"/>
        <end position="674"/>
    </location>
</feature>
<feature type="transmembrane region" description="Helical" evidence="2">
    <location>
        <begin position="695"/>
        <end position="717"/>
    </location>
</feature>
<feature type="region of interest" description="Disordered" evidence="3">
    <location>
        <begin position="804"/>
        <end position="831"/>
    </location>
</feature>
<feature type="compositionally biased region" description="Polar residues" evidence="3">
    <location>
        <begin position="808"/>
        <end position="823"/>
    </location>
</feature>
<protein>
    <recommendedName>
        <fullName>Probable arabinosyltransferase A</fullName>
        <ecNumber>2.4.2.-</ecNumber>
    </recommendedName>
</protein>
<reference key="1">
    <citation type="journal article" date="2001" name="Nature">
        <title>Massive gene decay in the leprosy bacillus.</title>
        <authorList>
            <person name="Cole S.T."/>
            <person name="Eiglmeier K."/>
            <person name="Parkhill J."/>
            <person name="James K.D."/>
            <person name="Thomson N.R."/>
            <person name="Wheeler P.R."/>
            <person name="Honore N."/>
            <person name="Garnier T."/>
            <person name="Churcher C.M."/>
            <person name="Harris D.E."/>
            <person name="Mungall K.L."/>
            <person name="Basham D."/>
            <person name="Brown D."/>
            <person name="Chillingworth T."/>
            <person name="Connor R."/>
            <person name="Davies R.M."/>
            <person name="Devlin K."/>
            <person name="Duthoy S."/>
            <person name="Feltwell T."/>
            <person name="Fraser A."/>
            <person name="Hamlin N."/>
            <person name="Holroyd S."/>
            <person name="Hornsby T."/>
            <person name="Jagels K."/>
            <person name="Lacroix C."/>
            <person name="Maclean J."/>
            <person name="Moule S."/>
            <person name="Murphy L.D."/>
            <person name="Oliver K."/>
            <person name="Quail M.A."/>
            <person name="Rajandream M.A."/>
            <person name="Rutherford K.M."/>
            <person name="Rutter S."/>
            <person name="Seeger K."/>
            <person name="Simon S."/>
            <person name="Simmonds M."/>
            <person name="Skelton J."/>
            <person name="Squares R."/>
            <person name="Squares S."/>
            <person name="Stevens K."/>
            <person name="Taylor K."/>
            <person name="Whitehead S."/>
            <person name="Woodward J.R."/>
            <person name="Barrell B.G."/>
        </authorList>
    </citation>
    <scope>NUCLEOTIDE SEQUENCE [LARGE SCALE GENOMIC DNA]</scope>
    <source>
        <strain>TN</strain>
    </source>
</reference>
<proteinExistence type="inferred from homology"/>
<gene>
    <name type="primary">embA</name>
    <name type="ordered locus">ML0105</name>
</gene>
<organism>
    <name type="scientific">Mycobacterium leprae (strain TN)</name>
    <dbReference type="NCBI Taxonomy" id="272631"/>
    <lineage>
        <taxon>Bacteria</taxon>
        <taxon>Bacillati</taxon>
        <taxon>Actinomycetota</taxon>
        <taxon>Actinomycetes</taxon>
        <taxon>Mycobacteriales</taxon>
        <taxon>Mycobacteriaceae</taxon>
        <taxon>Mycobacterium</taxon>
    </lineage>
</organism>